<dbReference type="EC" id="3.4.11.18" evidence="2"/>
<dbReference type="EMBL" id="CR858696">
    <property type="protein sequence ID" value="CAH90907.1"/>
    <property type="molecule type" value="mRNA"/>
</dbReference>
<dbReference type="RefSeq" id="NP_001125517.1">
    <property type="nucleotide sequence ID" value="NM_001132045.1"/>
</dbReference>
<dbReference type="SMR" id="Q5RBF3"/>
<dbReference type="FunCoup" id="Q5RBF3">
    <property type="interactions" value="2695"/>
</dbReference>
<dbReference type="STRING" id="9601.ENSPPYP00000016687"/>
<dbReference type="MEROPS" id="M24.017"/>
<dbReference type="Ensembl" id="ENSPPYT00000017366.3">
    <property type="protein sequence ID" value="ENSPPYP00000016687.2"/>
    <property type="gene ID" value="ENSPPYG00000014945.3"/>
</dbReference>
<dbReference type="GeneID" id="100172428"/>
<dbReference type="KEGG" id="pon:100172428"/>
<dbReference type="CTD" id="23173"/>
<dbReference type="eggNOG" id="KOG2738">
    <property type="taxonomic scope" value="Eukaryota"/>
</dbReference>
<dbReference type="GeneTree" id="ENSGT00940000158205"/>
<dbReference type="HOGENOM" id="CLU_015857_2_1_1"/>
<dbReference type="InParanoid" id="Q5RBF3"/>
<dbReference type="OMA" id="FYGDHAY"/>
<dbReference type="OrthoDB" id="3209743at2759"/>
<dbReference type="TreeFam" id="TF105753"/>
<dbReference type="Proteomes" id="UP000001595">
    <property type="component" value="Chromosome 4"/>
</dbReference>
<dbReference type="GO" id="GO:0022626">
    <property type="term" value="C:cytosolic ribosome"/>
    <property type="evidence" value="ECO:0007669"/>
    <property type="project" value="UniProtKB-UniRule"/>
</dbReference>
<dbReference type="GO" id="GO:0004239">
    <property type="term" value="F:initiator methionyl aminopeptidase activity"/>
    <property type="evidence" value="ECO:0007669"/>
    <property type="project" value="UniProtKB-UniRule"/>
</dbReference>
<dbReference type="GO" id="GO:0070006">
    <property type="term" value="F:metalloaminopeptidase activity"/>
    <property type="evidence" value="ECO:0007669"/>
    <property type="project" value="UniProtKB-UniRule"/>
</dbReference>
<dbReference type="GO" id="GO:0008270">
    <property type="term" value="F:zinc ion binding"/>
    <property type="evidence" value="ECO:0007669"/>
    <property type="project" value="UniProtKB-KW"/>
</dbReference>
<dbReference type="GO" id="GO:0051604">
    <property type="term" value="P:protein maturation"/>
    <property type="evidence" value="ECO:0007669"/>
    <property type="project" value="Ensembl"/>
</dbReference>
<dbReference type="GO" id="GO:0006508">
    <property type="term" value="P:proteolysis"/>
    <property type="evidence" value="ECO:0007669"/>
    <property type="project" value="UniProtKB-KW"/>
</dbReference>
<dbReference type="CDD" id="cd01086">
    <property type="entry name" value="MetAP1"/>
    <property type="match status" value="1"/>
</dbReference>
<dbReference type="FunFam" id="3.90.230.10:FF:000010">
    <property type="entry name" value="Methionine aminopeptidase"/>
    <property type="match status" value="1"/>
</dbReference>
<dbReference type="Gene3D" id="3.90.230.10">
    <property type="entry name" value="Creatinase/methionine aminopeptidase superfamily"/>
    <property type="match status" value="1"/>
</dbReference>
<dbReference type="HAMAP" id="MF_01974">
    <property type="entry name" value="MetAP_1"/>
    <property type="match status" value="1"/>
</dbReference>
<dbReference type="InterPro" id="IPR036005">
    <property type="entry name" value="Creatinase/aminopeptidase-like"/>
</dbReference>
<dbReference type="InterPro" id="IPR000994">
    <property type="entry name" value="Pept_M24"/>
</dbReference>
<dbReference type="InterPro" id="IPR001714">
    <property type="entry name" value="Pept_M24_MAP"/>
</dbReference>
<dbReference type="InterPro" id="IPR002467">
    <property type="entry name" value="Pept_M24A_MAP1"/>
</dbReference>
<dbReference type="InterPro" id="IPR031615">
    <property type="entry name" value="Zfn-C6H2"/>
</dbReference>
<dbReference type="NCBIfam" id="TIGR00500">
    <property type="entry name" value="met_pdase_I"/>
    <property type="match status" value="1"/>
</dbReference>
<dbReference type="PANTHER" id="PTHR43330">
    <property type="entry name" value="METHIONINE AMINOPEPTIDASE"/>
    <property type="match status" value="1"/>
</dbReference>
<dbReference type="PANTHER" id="PTHR43330:SF7">
    <property type="entry name" value="METHIONINE AMINOPEPTIDASE 1"/>
    <property type="match status" value="1"/>
</dbReference>
<dbReference type="Pfam" id="PF00557">
    <property type="entry name" value="Peptidase_M24"/>
    <property type="match status" value="1"/>
</dbReference>
<dbReference type="Pfam" id="PF15801">
    <property type="entry name" value="zf-C6H2"/>
    <property type="match status" value="1"/>
</dbReference>
<dbReference type="PRINTS" id="PR00599">
    <property type="entry name" value="MAPEPTIDASE"/>
</dbReference>
<dbReference type="SUPFAM" id="SSF55920">
    <property type="entry name" value="Creatinase/aminopeptidase"/>
    <property type="match status" value="1"/>
</dbReference>
<dbReference type="PROSITE" id="PS00680">
    <property type="entry name" value="MAP_1"/>
    <property type="match status" value="1"/>
</dbReference>
<dbReference type="PROSITE" id="PS52013">
    <property type="entry name" value="ZF_C6H2"/>
    <property type="match status" value="1"/>
</dbReference>
<keyword id="KW-0007">Acetylation</keyword>
<keyword id="KW-0031">Aminopeptidase</keyword>
<keyword id="KW-0963">Cytoplasm</keyword>
<keyword id="KW-0378">Hydrolase</keyword>
<keyword id="KW-0479">Metal-binding</keyword>
<keyword id="KW-0645">Protease</keyword>
<keyword id="KW-1185">Reference proteome</keyword>
<keyword id="KW-0862">Zinc</keyword>
<keyword id="KW-0863">Zinc-finger</keyword>
<evidence type="ECO:0000250" key="1">
    <source>
        <dbReference type="UniProtKB" id="P53582"/>
    </source>
</evidence>
<evidence type="ECO:0000255" key="2">
    <source>
        <dbReference type="HAMAP-Rule" id="MF_03174"/>
    </source>
</evidence>
<evidence type="ECO:0000255" key="3">
    <source>
        <dbReference type="PROSITE-ProRule" id="PRU01357"/>
    </source>
</evidence>
<organism>
    <name type="scientific">Pongo abelii</name>
    <name type="common">Sumatran orangutan</name>
    <name type="synonym">Pongo pygmaeus abelii</name>
    <dbReference type="NCBI Taxonomy" id="9601"/>
    <lineage>
        <taxon>Eukaryota</taxon>
        <taxon>Metazoa</taxon>
        <taxon>Chordata</taxon>
        <taxon>Craniata</taxon>
        <taxon>Vertebrata</taxon>
        <taxon>Euteleostomi</taxon>
        <taxon>Mammalia</taxon>
        <taxon>Eutheria</taxon>
        <taxon>Euarchontoglires</taxon>
        <taxon>Primates</taxon>
        <taxon>Haplorrhini</taxon>
        <taxon>Catarrhini</taxon>
        <taxon>Hominidae</taxon>
        <taxon>Pongo</taxon>
    </lineage>
</organism>
<name>MAP1_PONAB</name>
<gene>
    <name type="primary">METAP1</name>
</gene>
<comment type="function">
    <text evidence="2">Cotranslationally removes the N-terminal methionine from nascent proteins. The N-terminal methionine is often cleaved when the second residue in the primary sequence is small and uncharged (Met-Ala-, Cys, Gly, Pro, Ser, Thr, or Val).</text>
</comment>
<comment type="catalytic activity">
    <reaction evidence="2">
        <text>Release of N-terminal amino acids, preferentially methionine, from peptides and arylamides.</text>
        <dbReference type="EC" id="3.4.11.18"/>
    </reaction>
</comment>
<comment type="cofactor">
    <cofactor evidence="2">
        <name>Zn(2+)</name>
        <dbReference type="ChEBI" id="CHEBI:29105"/>
    </cofactor>
    <cofactor evidence="2">
        <name>Co(2+)</name>
        <dbReference type="ChEBI" id="CHEBI:48828"/>
    </cofactor>
    <cofactor evidence="2">
        <name>Mn(2+)</name>
        <dbReference type="ChEBI" id="CHEBI:29035"/>
    </cofactor>
    <cofactor evidence="2">
        <name>Fe(2+)</name>
        <dbReference type="ChEBI" id="CHEBI:29033"/>
    </cofactor>
    <text evidence="2">Binds 2 divalent metal cations per subunit. Has a high-affinity and a low affinity metal-binding site. The true nature of the physiological cofactor is under debate. The enzyme is active with zinc, cobalt, manganese or divalent iron ions. Has high activity with zinc; zinc cofactor is transferred into the active site region by the ZNG1 zinc chaperone.</text>
</comment>
<comment type="subunit">
    <text evidence="2">Associates with the 60S ribosomal subunit of the 80S translational complex.</text>
</comment>
<comment type="subcellular location">
    <subcellularLocation>
        <location evidence="2">Cytoplasm</location>
    </subcellularLocation>
</comment>
<comment type="similarity">
    <text evidence="2">Belongs to the peptidase M24A family. Methionine aminopeptidase type 1 subfamily.</text>
</comment>
<sequence>MAAVETRVCETDGCSSEAKLQCPTCIKLGIQGSYFCSQECFKGSWATHKLLHKKAKDEKAKREVSSWTVEGDINTDPWAGYRYTGKLRPHYPLMPTRPVPSYIQRPDYADHPLGMSESEQALKGTSQIKLLSSEDIEGMRLVCRLAREVLDIAAGMIKPGVTTEEIDHAVHLACIARNCYPSPLNYYNFPKSCCTSVNEVICHGIPDRRPLQEGDIVNVDITLYRNGYHGDLNETFFVGEVDDGARKLVQTTYECLMQAIDAVKPGVRYRELGNIIQKHAQANGFSVVRSYCGHGIHKLFHTAPNVPHYAKNKAVGVMKSGHVFTIEPMICEGGWQDETWPDGWTAVTRDGKRSAQFEHTLLVTDTGCEILTRRLDSARPHFMSQF</sequence>
<proteinExistence type="evidence at transcript level"/>
<feature type="initiator methionine" description="Removed" evidence="1">
    <location>
        <position position="1"/>
    </location>
</feature>
<feature type="chain" id="PRO_0000323735" description="Methionine aminopeptidase 1">
    <location>
        <begin position="2"/>
        <end position="386"/>
    </location>
</feature>
<feature type="zinc finger region" description="C6H2-type" evidence="3">
    <location>
        <begin position="6"/>
        <end position="59"/>
    </location>
</feature>
<feature type="binding site" evidence="2">
    <location>
        <position position="9"/>
    </location>
    <ligand>
        <name>Zn(2+)</name>
        <dbReference type="ChEBI" id="CHEBI:29105"/>
        <label>1</label>
    </ligand>
</feature>
<feature type="binding site" evidence="2">
    <location>
        <position position="14"/>
    </location>
    <ligand>
        <name>Zn(2+)</name>
        <dbReference type="ChEBI" id="CHEBI:29105"/>
        <label>1</label>
    </ligand>
</feature>
<feature type="binding site" evidence="2">
    <location>
        <position position="22"/>
    </location>
    <ligand>
        <name>Zn(2+)</name>
        <dbReference type="ChEBI" id="CHEBI:29105"/>
        <label>2</label>
    </ligand>
</feature>
<feature type="binding site" evidence="2">
    <location>
        <position position="25"/>
    </location>
    <ligand>
        <name>Zn(2+)</name>
        <dbReference type="ChEBI" id="CHEBI:29105"/>
        <label>2</label>
    </ligand>
</feature>
<feature type="binding site" evidence="2">
    <location>
        <position position="36"/>
    </location>
    <ligand>
        <name>Zn(2+)</name>
        <dbReference type="ChEBI" id="CHEBI:29105"/>
        <label>1</label>
    </ligand>
</feature>
<feature type="binding site" evidence="2">
    <location>
        <position position="40"/>
    </location>
    <ligand>
        <name>Zn(2+)</name>
        <dbReference type="ChEBI" id="CHEBI:29105"/>
        <label>1</label>
    </ligand>
</feature>
<feature type="binding site" evidence="2">
    <location>
        <position position="48"/>
    </location>
    <ligand>
        <name>Zn(2+)</name>
        <dbReference type="ChEBI" id="CHEBI:29105"/>
        <label>2</label>
    </ligand>
</feature>
<feature type="binding site" evidence="2">
    <location>
        <position position="52"/>
    </location>
    <ligand>
        <name>Zn(2+)</name>
        <dbReference type="ChEBI" id="CHEBI:29105"/>
        <label>2</label>
    </ligand>
</feature>
<feature type="binding site" evidence="2">
    <location>
        <position position="203"/>
    </location>
    <ligand>
        <name>a protein</name>
        <dbReference type="ChEBI" id="CHEBI:16541"/>
    </ligand>
    <ligandPart>
        <name>N-terminal L-methionine residue</name>
        <dbReference type="ChEBI" id="CHEBI:64731"/>
    </ligandPart>
</feature>
<feature type="binding site" evidence="2">
    <location>
        <position position="220"/>
    </location>
    <ligand>
        <name>Zn(2+)</name>
        <dbReference type="ChEBI" id="CHEBI:29105"/>
        <label>3</label>
    </ligand>
</feature>
<feature type="binding site" evidence="2">
    <location>
        <position position="231"/>
    </location>
    <ligand>
        <name>Zn(2+)</name>
        <dbReference type="ChEBI" id="CHEBI:29105"/>
        <label>3</label>
    </ligand>
</feature>
<feature type="binding site" evidence="2">
    <location>
        <position position="231"/>
    </location>
    <ligand>
        <name>Zn(2+)</name>
        <dbReference type="ChEBI" id="CHEBI:29105"/>
        <label>4</label>
        <note>catalytic</note>
    </ligand>
</feature>
<feature type="binding site" evidence="2">
    <location>
        <position position="294"/>
    </location>
    <ligand>
        <name>Zn(2+)</name>
        <dbReference type="ChEBI" id="CHEBI:29105"/>
        <label>4</label>
        <note>catalytic</note>
    </ligand>
</feature>
<feature type="binding site" evidence="2">
    <location>
        <position position="301"/>
    </location>
    <ligand>
        <name>a protein</name>
        <dbReference type="ChEBI" id="CHEBI:16541"/>
    </ligand>
    <ligandPart>
        <name>N-terminal L-methionine residue</name>
        <dbReference type="ChEBI" id="CHEBI:64731"/>
    </ligandPart>
</feature>
<feature type="binding site" evidence="2">
    <location>
        <position position="327"/>
    </location>
    <ligand>
        <name>Zn(2+)</name>
        <dbReference type="ChEBI" id="CHEBI:29105"/>
        <label>4</label>
        <note>catalytic</note>
    </ligand>
</feature>
<feature type="binding site" evidence="2">
    <location>
        <position position="358"/>
    </location>
    <ligand>
        <name>Zn(2+)</name>
        <dbReference type="ChEBI" id="CHEBI:29105"/>
        <label>3</label>
    </ligand>
</feature>
<feature type="binding site" evidence="2">
    <location>
        <position position="358"/>
    </location>
    <ligand>
        <name>Zn(2+)</name>
        <dbReference type="ChEBI" id="CHEBI:29105"/>
        <label>4</label>
        <note>catalytic</note>
    </ligand>
</feature>
<feature type="modified residue" description="N-acetylalanine" evidence="1">
    <location>
        <position position="2"/>
    </location>
</feature>
<reference key="1">
    <citation type="submission" date="2004-11" db="EMBL/GenBank/DDBJ databases">
        <authorList>
            <consortium name="The German cDNA consortium"/>
        </authorList>
    </citation>
    <scope>NUCLEOTIDE SEQUENCE [LARGE SCALE MRNA]</scope>
    <source>
        <tissue>Heart</tissue>
    </source>
</reference>
<accession>Q5RBF3</accession>
<protein>
    <recommendedName>
        <fullName evidence="2">Methionine aminopeptidase 1</fullName>
        <shortName evidence="2">MAP 1</shortName>
        <shortName evidence="2">MetAP 1</shortName>
        <ecNumber evidence="2">3.4.11.18</ecNumber>
    </recommendedName>
    <alternativeName>
        <fullName evidence="2">Peptidase M 1</fullName>
    </alternativeName>
</protein>